<protein>
    <recommendedName>
        <fullName evidence="1">Glutathione transport system permease protein GsiC</fullName>
    </recommendedName>
</protein>
<feature type="chain" id="PRO_0000279995" description="Glutathione transport system permease protein GsiC">
    <location>
        <begin position="1"/>
        <end position="306"/>
    </location>
</feature>
<feature type="topological domain" description="Cytoplasmic" evidence="2">
    <location>
        <begin position="1"/>
        <end position="8"/>
    </location>
</feature>
<feature type="transmembrane region" description="Helical" evidence="3">
    <location>
        <begin position="9"/>
        <end position="29"/>
    </location>
</feature>
<feature type="topological domain" description="Periplasmic" evidence="2">
    <location>
        <begin position="30"/>
        <end position="102"/>
    </location>
</feature>
<feature type="transmembrane region" description="Helical" evidence="3">
    <location>
        <begin position="103"/>
        <end position="123"/>
    </location>
</feature>
<feature type="topological domain" description="Cytoplasmic" evidence="2">
    <location>
        <begin position="124"/>
        <end position="134"/>
    </location>
</feature>
<feature type="transmembrane region" description="Helical" evidence="3">
    <location>
        <begin position="135"/>
        <end position="155"/>
    </location>
</feature>
<feature type="topological domain" description="Periplasmic" evidence="2">
    <location>
        <begin position="156"/>
        <end position="168"/>
    </location>
</feature>
<feature type="transmembrane region" description="Helical" evidence="3">
    <location>
        <begin position="169"/>
        <end position="189"/>
    </location>
</feature>
<feature type="topological domain" description="Cytoplasmic" evidence="2">
    <location>
        <begin position="190"/>
        <end position="228"/>
    </location>
</feature>
<feature type="transmembrane region" description="Helical" evidence="3">
    <location>
        <begin position="229"/>
        <end position="249"/>
    </location>
</feature>
<feature type="topological domain" description="Periplasmic" evidence="2">
    <location>
        <begin position="250"/>
        <end position="278"/>
    </location>
</feature>
<feature type="transmembrane region" description="Helical" evidence="3">
    <location>
        <begin position="279"/>
        <end position="299"/>
    </location>
</feature>
<feature type="topological domain" description="Cytoplasmic" evidence="2">
    <location>
        <begin position="300"/>
        <end position="306"/>
    </location>
</feature>
<feature type="domain" description="ABC transmembrane type-1" evidence="3">
    <location>
        <begin position="95"/>
        <end position="292"/>
    </location>
</feature>
<proteinExistence type="inferred from homology"/>
<reference key="1">
    <citation type="journal article" date="2001" name="Nature">
        <title>Complete genome sequence of a multiple drug resistant Salmonella enterica serovar Typhi CT18.</title>
        <authorList>
            <person name="Parkhill J."/>
            <person name="Dougan G."/>
            <person name="James K.D."/>
            <person name="Thomson N.R."/>
            <person name="Pickard D."/>
            <person name="Wain J."/>
            <person name="Churcher C.M."/>
            <person name="Mungall K.L."/>
            <person name="Bentley S.D."/>
            <person name="Holden M.T.G."/>
            <person name="Sebaihia M."/>
            <person name="Baker S."/>
            <person name="Basham D."/>
            <person name="Brooks K."/>
            <person name="Chillingworth T."/>
            <person name="Connerton P."/>
            <person name="Cronin A."/>
            <person name="Davis P."/>
            <person name="Davies R.M."/>
            <person name="Dowd L."/>
            <person name="White N."/>
            <person name="Farrar J."/>
            <person name="Feltwell T."/>
            <person name="Hamlin N."/>
            <person name="Haque A."/>
            <person name="Hien T.T."/>
            <person name="Holroyd S."/>
            <person name="Jagels K."/>
            <person name="Krogh A."/>
            <person name="Larsen T.S."/>
            <person name="Leather S."/>
            <person name="Moule S."/>
            <person name="O'Gaora P."/>
            <person name="Parry C."/>
            <person name="Quail M.A."/>
            <person name="Rutherford K.M."/>
            <person name="Simmonds M."/>
            <person name="Skelton J."/>
            <person name="Stevens K."/>
            <person name="Whitehead S."/>
            <person name="Barrell B.G."/>
        </authorList>
    </citation>
    <scope>NUCLEOTIDE SEQUENCE [LARGE SCALE GENOMIC DNA]</scope>
    <source>
        <strain>CT18</strain>
    </source>
</reference>
<reference key="2">
    <citation type="journal article" date="2003" name="J. Bacteriol.">
        <title>Comparative genomics of Salmonella enterica serovar Typhi strains Ty2 and CT18.</title>
        <authorList>
            <person name="Deng W."/>
            <person name="Liou S.-R."/>
            <person name="Plunkett G. III"/>
            <person name="Mayhew G.F."/>
            <person name="Rose D.J."/>
            <person name="Burland V."/>
            <person name="Kodoyianni V."/>
            <person name="Schwartz D.C."/>
            <person name="Blattner F.R."/>
        </authorList>
    </citation>
    <scope>NUCLEOTIDE SEQUENCE [LARGE SCALE GENOMIC DNA]</scope>
    <source>
        <strain>ATCC 700931 / Ty2</strain>
    </source>
</reference>
<accession>Q8Z862</accession>
<accession>Q7C8T8</accession>
<gene>
    <name evidence="1" type="primary">gsiC</name>
    <name type="ordered locus">STY0889</name>
    <name type="ordered locus">t2039</name>
</gene>
<organism>
    <name type="scientific">Salmonella typhi</name>
    <dbReference type="NCBI Taxonomy" id="90370"/>
    <lineage>
        <taxon>Bacteria</taxon>
        <taxon>Pseudomonadati</taxon>
        <taxon>Pseudomonadota</taxon>
        <taxon>Gammaproteobacteria</taxon>
        <taxon>Enterobacterales</taxon>
        <taxon>Enterobacteriaceae</taxon>
        <taxon>Salmonella</taxon>
    </lineage>
</organism>
<comment type="function">
    <text evidence="1">Part of the ABC transporter complex GsiABCD involved in glutathione import. Probably responsible for the translocation of the substrate across the membrane.</text>
</comment>
<comment type="subunit">
    <text evidence="1">The complex is composed of two ATP-binding proteins (GsiA), two transmembrane proteins (GsiC and GsiD) and a solute-binding protein (GsiB).</text>
</comment>
<comment type="subcellular location">
    <subcellularLocation>
        <location evidence="1">Cell inner membrane</location>
        <topology evidence="2">Multi-pass membrane protein</topology>
    </subcellularLocation>
</comment>
<comment type="similarity">
    <text evidence="4">Belongs to the binding-protein-dependent transport system permease family.</text>
</comment>
<sequence>MLNYVLKRLLGLIPTLLIVAVLVFLFVHLLPGDPARLIAGPEADAQVIALVRQQLGLDQPLHVQFWHYITHVLQGDFGTSMVSRRPVSEEIASRFLPTLWLTITSMIWAVLFGMAIGIAAAVWRNRWPDRVGMTLAVTGISFPAFALGMLLMQIFSVDLGWLPTVGADSWQHYILPSLTLGAAVASVMARFTRSSFVDVLSEDYMRTARAKGVSETWVVLKHGLRNAMIPVVTMMGLQFGFLLGGSIVVEKVFNWPGLGRLLVDSVDMRDYPVIQAEVLLFSLEFILINLVVDVLYAAINPAIRYK</sequence>
<keyword id="KW-0997">Cell inner membrane</keyword>
<keyword id="KW-1003">Cell membrane</keyword>
<keyword id="KW-0472">Membrane</keyword>
<keyword id="KW-0812">Transmembrane</keyword>
<keyword id="KW-1133">Transmembrane helix</keyword>
<keyword id="KW-0813">Transport</keyword>
<dbReference type="EMBL" id="AL513382">
    <property type="protein sequence ID" value="CAD05296.1"/>
    <property type="molecule type" value="Genomic_DNA"/>
</dbReference>
<dbReference type="EMBL" id="AE014613">
    <property type="protein sequence ID" value="AAO69651.1"/>
    <property type="molecule type" value="Genomic_DNA"/>
</dbReference>
<dbReference type="RefSeq" id="NP_455384.1">
    <property type="nucleotide sequence ID" value="NC_003198.1"/>
</dbReference>
<dbReference type="RefSeq" id="WP_000936066.1">
    <property type="nucleotide sequence ID" value="NZ_WSUR01000019.1"/>
</dbReference>
<dbReference type="SMR" id="Q8Z862"/>
<dbReference type="STRING" id="220341.gene:17584886"/>
<dbReference type="KEGG" id="stt:t2039"/>
<dbReference type="KEGG" id="sty:STY0889"/>
<dbReference type="PATRIC" id="fig|220341.7.peg.898"/>
<dbReference type="eggNOG" id="COG0601">
    <property type="taxonomic scope" value="Bacteria"/>
</dbReference>
<dbReference type="HOGENOM" id="CLU_036879_0_0_6"/>
<dbReference type="OMA" id="WLGLMEQ"/>
<dbReference type="OrthoDB" id="9805855at2"/>
<dbReference type="Proteomes" id="UP000000541">
    <property type="component" value="Chromosome"/>
</dbReference>
<dbReference type="Proteomes" id="UP000002670">
    <property type="component" value="Chromosome"/>
</dbReference>
<dbReference type="GO" id="GO:0005886">
    <property type="term" value="C:plasma membrane"/>
    <property type="evidence" value="ECO:0007669"/>
    <property type="project" value="UniProtKB-SubCell"/>
</dbReference>
<dbReference type="GO" id="GO:0055085">
    <property type="term" value="P:transmembrane transport"/>
    <property type="evidence" value="ECO:0007669"/>
    <property type="project" value="InterPro"/>
</dbReference>
<dbReference type="CDD" id="cd06261">
    <property type="entry name" value="TM_PBP2"/>
    <property type="match status" value="1"/>
</dbReference>
<dbReference type="FunFam" id="1.10.3720.10:FF:000024">
    <property type="entry name" value="Glutathione ABC transporter permease GsiC"/>
    <property type="match status" value="1"/>
</dbReference>
<dbReference type="Gene3D" id="1.10.3720.10">
    <property type="entry name" value="MetI-like"/>
    <property type="match status" value="1"/>
</dbReference>
<dbReference type="InterPro" id="IPR045621">
    <property type="entry name" value="BPD_transp_1_N"/>
</dbReference>
<dbReference type="InterPro" id="IPR000515">
    <property type="entry name" value="MetI-like"/>
</dbReference>
<dbReference type="InterPro" id="IPR035906">
    <property type="entry name" value="MetI-like_sf"/>
</dbReference>
<dbReference type="NCBIfam" id="NF011661">
    <property type="entry name" value="PRK15081.1"/>
    <property type="match status" value="1"/>
</dbReference>
<dbReference type="PANTHER" id="PTHR43163">
    <property type="entry name" value="DIPEPTIDE TRANSPORT SYSTEM PERMEASE PROTEIN DPPB-RELATED"/>
    <property type="match status" value="1"/>
</dbReference>
<dbReference type="PANTHER" id="PTHR43163:SF5">
    <property type="entry name" value="GLUTATHIONE TRANSPORT SYSTEM PERMEASE PROTEIN GSIC"/>
    <property type="match status" value="1"/>
</dbReference>
<dbReference type="Pfam" id="PF00528">
    <property type="entry name" value="BPD_transp_1"/>
    <property type="match status" value="1"/>
</dbReference>
<dbReference type="Pfam" id="PF19300">
    <property type="entry name" value="BPD_transp_1_N"/>
    <property type="match status" value="1"/>
</dbReference>
<dbReference type="SUPFAM" id="SSF161098">
    <property type="entry name" value="MetI-like"/>
    <property type="match status" value="1"/>
</dbReference>
<dbReference type="PROSITE" id="PS50928">
    <property type="entry name" value="ABC_TM1"/>
    <property type="match status" value="1"/>
</dbReference>
<evidence type="ECO:0000250" key="1">
    <source>
        <dbReference type="UniProtKB" id="P75798"/>
    </source>
</evidence>
<evidence type="ECO:0000255" key="2"/>
<evidence type="ECO:0000255" key="3">
    <source>
        <dbReference type="PROSITE-ProRule" id="PRU00441"/>
    </source>
</evidence>
<evidence type="ECO:0000305" key="4"/>
<name>GSIC_SALTI</name>